<feature type="chain" id="PRO_1000070630" description="L-ribulose-5-phosphate 3-epimerase UlaE">
    <location>
        <begin position="1"/>
        <end position="284"/>
    </location>
</feature>
<keyword id="KW-0413">Isomerase</keyword>
<keyword id="KW-1185">Reference proteome</keyword>
<evidence type="ECO:0000255" key="1">
    <source>
        <dbReference type="HAMAP-Rule" id="MF_01951"/>
    </source>
</evidence>
<sequence>MLSKQIPLGIYEKALPAGECWLERLQLAKTLGFDFVEMSVDETDERLSRLDWSREQRLALVNAIVETGVRVPSMCLSAHRRFPLGSEDDAVRAQGLEIMRKAIQFAQDVGIRVIQLAGYDVYYQEANNETRRRFRDGLKESVEMASRAQVTLAMEIMDYPLMNSISKALGYAHYLNNPWFQLYPDIGNLSAWDNDVQMELQAGIGHIVAVHVKDTKPGVFKNVPFGEGVVDFERCFETLKQSGYCGPYLIEMWSETAEDPAAEVAKARDWVKARMAKAGMVEAA</sequence>
<dbReference type="EC" id="5.1.3.22" evidence="1"/>
<dbReference type="EMBL" id="CP000800">
    <property type="protein sequence ID" value="ABV17481.1"/>
    <property type="molecule type" value="Genomic_DNA"/>
</dbReference>
<dbReference type="RefSeq" id="WP_000949511.1">
    <property type="nucleotide sequence ID" value="NC_009801.1"/>
</dbReference>
<dbReference type="SMR" id="A7ZV68"/>
<dbReference type="KEGG" id="ecw:EcE24377A_4758"/>
<dbReference type="HOGENOM" id="CLU_082738_0_0_6"/>
<dbReference type="UniPathway" id="UPA00263">
    <property type="reaction ID" value="UER00379"/>
</dbReference>
<dbReference type="Proteomes" id="UP000001122">
    <property type="component" value="Chromosome"/>
</dbReference>
<dbReference type="GO" id="GO:0016861">
    <property type="term" value="F:intramolecular oxidoreductase activity, interconverting aldoses and ketoses"/>
    <property type="evidence" value="ECO:0007669"/>
    <property type="project" value="InterPro"/>
</dbReference>
<dbReference type="GO" id="GO:0034015">
    <property type="term" value="F:L-ribulose-5-phosphate 3-epimerase activity"/>
    <property type="evidence" value="ECO:0007669"/>
    <property type="project" value="UniProtKB-UniRule"/>
</dbReference>
<dbReference type="GO" id="GO:0019854">
    <property type="term" value="P:L-ascorbic acid catabolic process"/>
    <property type="evidence" value="ECO:0007669"/>
    <property type="project" value="UniProtKB-UniRule"/>
</dbReference>
<dbReference type="FunFam" id="3.20.20.150:FF:000003">
    <property type="entry name" value="L-ribulose-5-phosphate 3-epimerase UlaE"/>
    <property type="match status" value="1"/>
</dbReference>
<dbReference type="Gene3D" id="3.20.20.150">
    <property type="entry name" value="Divalent-metal-dependent TIM barrel enzymes"/>
    <property type="match status" value="1"/>
</dbReference>
<dbReference type="HAMAP" id="MF_01951">
    <property type="entry name" value="UlaE"/>
    <property type="match status" value="1"/>
</dbReference>
<dbReference type="InterPro" id="IPR004560">
    <property type="entry name" value="L-Ru-5P_3-Epase"/>
</dbReference>
<dbReference type="InterPro" id="IPR023492">
    <property type="entry name" value="L-Ru-5P_3-Epase_Enterobacteria"/>
</dbReference>
<dbReference type="InterPro" id="IPR050417">
    <property type="entry name" value="Sugar_Epim/Isomerase"/>
</dbReference>
<dbReference type="InterPro" id="IPR036237">
    <property type="entry name" value="Xyl_isomerase-like_sf"/>
</dbReference>
<dbReference type="InterPro" id="IPR013022">
    <property type="entry name" value="Xyl_isomerase-like_TIM-brl"/>
</dbReference>
<dbReference type="NCBIfam" id="TIGR00542">
    <property type="entry name" value="hxl6Piso_put"/>
    <property type="match status" value="1"/>
</dbReference>
<dbReference type="NCBIfam" id="NF009688">
    <property type="entry name" value="PRK13209.1"/>
    <property type="match status" value="1"/>
</dbReference>
<dbReference type="NCBIfam" id="NF009689">
    <property type="entry name" value="PRK13210.1"/>
    <property type="match status" value="1"/>
</dbReference>
<dbReference type="PANTHER" id="PTHR43489">
    <property type="entry name" value="ISOMERASE"/>
    <property type="match status" value="1"/>
</dbReference>
<dbReference type="PANTHER" id="PTHR43489:SF8">
    <property type="entry name" value="L-RIBULOSE-5-PHOSPHATE 3-EPIMERASE ULAE"/>
    <property type="match status" value="1"/>
</dbReference>
<dbReference type="Pfam" id="PF01261">
    <property type="entry name" value="AP_endonuc_2"/>
    <property type="match status" value="1"/>
</dbReference>
<dbReference type="SUPFAM" id="SSF51658">
    <property type="entry name" value="Xylose isomerase-like"/>
    <property type="match status" value="1"/>
</dbReference>
<comment type="function">
    <text evidence="1">Catalyzes the isomerization of L-xylulose-5-phosphate to L-ribulose-5-phosphate. Is involved in the anaerobic L-ascorbate utilization.</text>
</comment>
<comment type="catalytic activity">
    <reaction evidence="1">
        <text>L-ribulose 5-phosphate = L-xylulose 5-phosphate</text>
        <dbReference type="Rhea" id="RHEA:18497"/>
        <dbReference type="ChEBI" id="CHEBI:57829"/>
        <dbReference type="ChEBI" id="CHEBI:58226"/>
        <dbReference type="EC" id="5.1.3.22"/>
    </reaction>
</comment>
<comment type="pathway">
    <text evidence="1">Cofactor degradation; L-ascorbate degradation; D-xylulose 5-phosphate from L-ascorbate: step 3/4.</text>
</comment>
<comment type="induction">
    <text evidence="1">Induced by L-ascorbate. Repressed by UlaR.</text>
</comment>
<comment type="similarity">
    <text evidence="1">Belongs to the L-ribulose-5-phosphate 3-epimerase family.</text>
</comment>
<proteinExistence type="inferred from homology"/>
<gene>
    <name evidence="1" type="primary">ulaE</name>
    <name type="ordered locus">EcE24377A_4758</name>
</gene>
<protein>
    <recommendedName>
        <fullName evidence="1">L-ribulose-5-phosphate 3-epimerase UlaE</fullName>
        <ecNumber evidence="1">5.1.3.22</ecNumber>
    </recommendedName>
    <alternativeName>
        <fullName evidence="1">L-ascorbate utilization protein E</fullName>
    </alternativeName>
    <alternativeName>
        <fullName evidence="1">L-xylulose-5-phosphate 3-epimerase</fullName>
    </alternativeName>
</protein>
<reference key="1">
    <citation type="journal article" date="2008" name="J. Bacteriol.">
        <title>The pangenome structure of Escherichia coli: comparative genomic analysis of E. coli commensal and pathogenic isolates.</title>
        <authorList>
            <person name="Rasko D.A."/>
            <person name="Rosovitz M.J."/>
            <person name="Myers G.S.A."/>
            <person name="Mongodin E.F."/>
            <person name="Fricke W.F."/>
            <person name="Gajer P."/>
            <person name="Crabtree J."/>
            <person name="Sebaihia M."/>
            <person name="Thomson N.R."/>
            <person name="Chaudhuri R."/>
            <person name="Henderson I.R."/>
            <person name="Sperandio V."/>
            <person name="Ravel J."/>
        </authorList>
    </citation>
    <scope>NUCLEOTIDE SEQUENCE [LARGE SCALE GENOMIC DNA]</scope>
    <source>
        <strain>E24377A / ETEC</strain>
    </source>
</reference>
<name>ULAE_ECO24</name>
<accession>A7ZV68</accession>
<organism>
    <name type="scientific">Escherichia coli O139:H28 (strain E24377A / ETEC)</name>
    <dbReference type="NCBI Taxonomy" id="331111"/>
    <lineage>
        <taxon>Bacteria</taxon>
        <taxon>Pseudomonadati</taxon>
        <taxon>Pseudomonadota</taxon>
        <taxon>Gammaproteobacteria</taxon>
        <taxon>Enterobacterales</taxon>
        <taxon>Enterobacteriaceae</taxon>
        <taxon>Escherichia</taxon>
    </lineage>
</organism>